<accession>B7N2U6</accession>
<evidence type="ECO:0000255" key="1">
    <source>
        <dbReference type="HAMAP-Rule" id="MF_00715"/>
    </source>
</evidence>
<evidence type="ECO:0000256" key="2">
    <source>
        <dbReference type="SAM" id="MobiDB-lite"/>
    </source>
</evidence>
<feature type="chain" id="PRO_1000148007" description="Protein SlyX">
    <location>
        <begin position="1"/>
        <end position="72"/>
    </location>
</feature>
<feature type="region of interest" description="Disordered" evidence="2">
    <location>
        <begin position="52"/>
        <end position="72"/>
    </location>
</feature>
<feature type="compositionally biased region" description="Polar residues" evidence="2">
    <location>
        <begin position="55"/>
        <end position="65"/>
    </location>
</feature>
<dbReference type="EMBL" id="CU928162">
    <property type="protein sequence ID" value="CAV17966.1"/>
    <property type="molecule type" value="Genomic_DNA"/>
</dbReference>
<dbReference type="RefSeq" id="WP_001153615.1">
    <property type="nucleotide sequence ID" value="NC_011745.1"/>
</dbReference>
<dbReference type="SMR" id="B7N2U6"/>
<dbReference type="KEGG" id="ecq:ECED1_4009"/>
<dbReference type="HOGENOM" id="CLU_180796_4_2_6"/>
<dbReference type="Proteomes" id="UP000000748">
    <property type="component" value="Chromosome"/>
</dbReference>
<dbReference type="Gene3D" id="1.20.5.300">
    <property type="match status" value="1"/>
</dbReference>
<dbReference type="HAMAP" id="MF_00715">
    <property type="entry name" value="SlyX"/>
    <property type="match status" value="1"/>
</dbReference>
<dbReference type="InterPro" id="IPR007236">
    <property type="entry name" value="SlyX"/>
</dbReference>
<dbReference type="NCBIfam" id="NF002750">
    <property type="entry name" value="PRK02793.1"/>
    <property type="match status" value="1"/>
</dbReference>
<dbReference type="PANTHER" id="PTHR36508">
    <property type="entry name" value="PROTEIN SLYX"/>
    <property type="match status" value="1"/>
</dbReference>
<dbReference type="PANTHER" id="PTHR36508:SF1">
    <property type="entry name" value="PROTEIN SLYX"/>
    <property type="match status" value="1"/>
</dbReference>
<dbReference type="Pfam" id="PF04102">
    <property type="entry name" value="SlyX"/>
    <property type="match status" value="1"/>
</dbReference>
<protein>
    <recommendedName>
        <fullName evidence="1">Protein SlyX</fullName>
    </recommendedName>
</protein>
<comment type="similarity">
    <text evidence="1">Belongs to the SlyX family.</text>
</comment>
<reference key="1">
    <citation type="journal article" date="2009" name="PLoS Genet.">
        <title>Organised genome dynamics in the Escherichia coli species results in highly diverse adaptive paths.</title>
        <authorList>
            <person name="Touchon M."/>
            <person name="Hoede C."/>
            <person name="Tenaillon O."/>
            <person name="Barbe V."/>
            <person name="Baeriswyl S."/>
            <person name="Bidet P."/>
            <person name="Bingen E."/>
            <person name="Bonacorsi S."/>
            <person name="Bouchier C."/>
            <person name="Bouvet O."/>
            <person name="Calteau A."/>
            <person name="Chiapello H."/>
            <person name="Clermont O."/>
            <person name="Cruveiller S."/>
            <person name="Danchin A."/>
            <person name="Diard M."/>
            <person name="Dossat C."/>
            <person name="Karoui M.E."/>
            <person name="Frapy E."/>
            <person name="Garry L."/>
            <person name="Ghigo J.M."/>
            <person name="Gilles A.M."/>
            <person name="Johnson J."/>
            <person name="Le Bouguenec C."/>
            <person name="Lescat M."/>
            <person name="Mangenot S."/>
            <person name="Martinez-Jehanne V."/>
            <person name="Matic I."/>
            <person name="Nassif X."/>
            <person name="Oztas S."/>
            <person name="Petit M.A."/>
            <person name="Pichon C."/>
            <person name="Rouy Z."/>
            <person name="Ruf C.S."/>
            <person name="Schneider D."/>
            <person name="Tourret J."/>
            <person name="Vacherie B."/>
            <person name="Vallenet D."/>
            <person name="Medigue C."/>
            <person name="Rocha E.P.C."/>
            <person name="Denamur E."/>
        </authorList>
    </citation>
    <scope>NUCLEOTIDE SEQUENCE [LARGE SCALE GENOMIC DNA]</scope>
    <source>
        <strain>ED1a</strain>
    </source>
</reference>
<sequence>MQDLSLEARLAELESRLAFQEITIEELNVTVTAHEMEMAKLRDHLRLLTEKLKASQPSNIASQAEETPPPHY</sequence>
<name>SLYX_ECO81</name>
<proteinExistence type="inferred from homology"/>
<gene>
    <name evidence="1" type="primary">slyX</name>
    <name type="ordered locus">ECED1_4009</name>
</gene>
<organism>
    <name type="scientific">Escherichia coli O81 (strain ED1a)</name>
    <dbReference type="NCBI Taxonomy" id="585397"/>
    <lineage>
        <taxon>Bacteria</taxon>
        <taxon>Pseudomonadati</taxon>
        <taxon>Pseudomonadota</taxon>
        <taxon>Gammaproteobacteria</taxon>
        <taxon>Enterobacterales</taxon>
        <taxon>Enterobacteriaceae</taxon>
        <taxon>Escherichia</taxon>
    </lineage>
</organism>